<evidence type="ECO:0000250" key="1">
    <source>
        <dbReference type="UniProtKB" id="P63235"/>
    </source>
</evidence>
<evidence type="ECO:0000255" key="2"/>
<evidence type="ECO:0000269" key="3">
    <source>
    </source>
</evidence>
<evidence type="ECO:0000305" key="4"/>
<name>GADC_SHIFL</name>
<accession>P63236</accession>
<accession>P39183</accession>
<accession>P76131</accession>
<accession>P77384</accession>
<accession>Q54152</accession>
<organism>
    <name type="scientific">Shigella flexneri</name>
    <dbReference type="NCBI Taxonomy" id="623"/>
    <lineage>
        <taxon>Bacteria</taxon>
        <taxon>Pseudomonadati</taxon>
        <taxon>Pseudomonadota</taxon>
        <taxon>Gammaproteobacteria</taxon>
        <taxon>Enterobacterales</taxon>
        <taxon>Enterobacteriaceae</taxon>
        <taxon>Shigella</taxon>
    </lineage>
</organism>
<sequence length="511" mass="55077">MATSVQTGKAKQLTLLGFFAITASMVMAVYEYPTFATSGFSLVFFLLLGGILWFIPVGLCAAEMATVDGWEEGGVFAWVSNTLGPRWGFAAISFGYLQIAIGFIPMLYFVLGALSYILKWPALNEDPITKTIAALIILWALALTQFGGTKYTARIAKVGFFAGILLPAFILIALAAIYLHSGAPVAIEMDSKTFFPDFSKVGTLVVFVAFILSYMGVEASATHVNEMSNPGRDYPLAMLLLMVAAICLSSVGGLSIAMVIPGNEINLSAGVMQTFTVLMSHVAPEIEWTVRVISALLLLGVLAEIASWIVGPSRGMYVTAQKNLLPAAFAKMNKNGVPVTLVISQLVITSIALIILTNTGGGNNMSFLIALALTVVIYLCAYFMLFIGYIVLVLKHPDLKRTFNIPGGKGVKLVVAIVGLLTSIMAFIVSFLPPDNIQGDSTDMYVELLVVSFLVVLALPFILYAVHDRKGKANTGVTLEPINSQNAPKGHFFLHPRARSPHYIVMNDKKH</sequence>
<gene>
    <name type="primary">gadC</name>
    <name type="synonym">acsA</name>
    <name type="synonym">xasA</name>
    <name type="ordered locus">SF1735</name>
    <name type="ordered locus">S1868</name>
</gene>
<comment type="function">
    <text evidence="1">Involved in glutaminase-dependent acid resistance. Exchanges extracellular glutamate (Glu) for intracellular gamma-aminobutyric acid (GABA) under acidic conditions. The ability to survive the extremely acidic conditions of the stomach is essential for successful colonization of the host by commensal and pathogenic bacteria.</text>
</comment>
<comment type="catalytic activity">
    <reaction evidence="1">
        <text>4-aminobutanoate(in) + L-glutamate(out) = 4-aminobutanoate(out) + L-glutamate(in)</text>
        <dbReference type="Rhea" id="RHEA:28919"/>
        <dbReference type="ChEBI" id="CHEBI:29985"/>
        <dbReference type="ChEBI" id="CHEBI:59888"/>
    </reaction>
</comment>
<comment type="activity regulation">
    <text evidence="1 3">Shows pH-dependent activity (By similarity). The glutamate analog L-trans-pyrrolidine-2,4-dicarboxylic acid (L-PDC) blocks the uptake of glutamate by selective inhibition (PubMed:12855178).</text>
</comment>
<comment type="subcellular location">
    <subcellularLocation>
        <location evidence="1">Cell inner membrane</location>
        <topology evidence="1">Multi-pass membrane protein</topology>
    </subcellularLocation>
</comment>
<comment type="similarity">
    <text evidence="4">Belongs to the amino acid-polyamine-organocation (APC) superfamily. Glutamate:GABA antiporter (GGA) (TC 2.A.3.7) family.</text>
</comment>
<dbReference type="EMBL" id="U46133">
    <property type="protein sequence ID" value="AAD14843.1"/>
    <property type="molecule type" value="Genomic_DNA"/>
</dbReference>
<dbReference type="EMBL" id="AE005674">
    <property type="protein sequence ID" value="AAN43310.2"/>
    <property type="molecule type" value="Genomic_DNA"/>
</dbReference>
<dbReference type="EMBL" id="AE014073">
    <property type="protein sequence ID" value="AAP17197.1"/>
    <property type="molecule type" value="Genomic_DNA"/>
</dbReference>
<dbReference type="RefSeq" id="NP_707603.2">
    <property type="nucleotide sequence ID" value="NC_004337.2"/>
</dbReference>
<dbReference type="RefSeq" id="WP_000246019.1">
    <property type="nucleotide sequence ID" value="NZ_WPGW01000136.1"/>
</dbReference>
<dbReference type="SMR" id="P63236"/>
<dbReference type="STRING" id="198214.SF1735"/>
<dbReference type="PaxDb" id="198214-SF1735"/>
<dbReference type="GeneID" id="1024915"/>
<dbReference type="GeneID" id="93775651"/>
<dbReference type="KEGG" id="sfl:SF1735"/>
<dbReference type="KEGG" id="sfx:S1868"/>
<dbReference type="PATRIC" id="fig|198214.7.peg.2055"/>
<dbReference type="HOGENOM" id="CLU_020854_4_0_6"/>
<dbReference type="Proteomes" id="UP000001006">
    <property type="component" value="Chromosome"/>
</dbReference>
<dbReference type="Proteomes" id="UP000002673">
    <property type="component" value="Chromosome"/>
</dbReference>
<dbReference type="GO" id="GO:0005886">
    <property type="term" value="C:plasma membrane"/>
    <property type="evidence" value="ECO:0007669"/>
    <property type="project" value="UniProtKB-SubCell"/>
</dbReference>
<dbReference type="GO" id="GO:0015297">
    <property type="term" value="F:antiporter activity"/>
    <property type="evidence" value="ECO:0007669"/>
    <property type="project" value="UniProtKB-KW"/>
</dbReference>
<dbReference type="GO" id="GO:0006865">
    <property type="term" value="P:amino acid transport"/>
    <property type="evidence" value="ECO:0007669"/>
    <property type="project" value="UniProtKB-KW"/>
</dbReference>
<dbReference type="FunFam" id="1.20.1740.10:FF:000031">
    <property type="entry name" value="Glutamate:gamma-aminobutyric acid antiporter"/>
    <property type="match status" value="1"/>
</dbReference>
<dbReference type="Gene3D" id="1.20.1740.10">
    <property type="entry name" value="Amino acid/polyamine transporter I"/>
    <property type="match status" value="1"/>
</dbReference>
<dbReference type="InterPro" id="IPR002293">
    <property type="entry name" value="AA/rel_permease1"/>
</dbReference>
<dbReference type="InterPro" id="IPR050367">
    <property type="entry name" value="APC_superfamily"/>
</dbReference>
<dbReference type="InterPro" id="IPR004759">
    <property type="entry name" value="Glu_antiport"/>
</dbReference>
<dbReference type="NCBIfam" id="TIGR00910">
    <property type="entry name" value="2A0307_GadC"/>
    <property type="match status" value="1"/>
</dbReference>
<dbReference type="PANTHER" id="PTHR42770">
    <property type="entry name" value="AMINO ACID TRANSPORTER-RELATED"/>
    <property type="match status" value="1"/>
</dbReference>
<dbReference type="PANTHER" id="PTHR42770:SF15">
    <property type="entry name" value="GLUTAMATE_GAMMA-AMINOBUTYRATE ANTIPORTER-RELATED"/>
    <property type="match status" value="1"/>
</dbReference>
<dbReference type="Pfam" id="PF13520">
    <property type="entry name" value="AA_permease_2"/>
    <property type="match status" value="1"/>
</dbReference>
<dbReference type="PIRSF" id="PIRSF006060">
    <property type="entry name" value="AA_transporter"/>
    <property type="match status" value="1"/>
</dbReference>
<feature type="chain" id="PRO_0000213043" description="Glutamate/gamma-aminobutyrate antiporter">
    <location>
        <begin position="1"/>
        <end position="511"/>
    </location>
</feature>
<feature type="topological domain" description="Cytoplasmic" evidence="2">
    <location>
        <begin position="1"/>
        <end position="14"/>
    </location>
</feature>
<feature type="transmembrane region" description="Helical" evidence="2">
    <location>
        <begin position="15"/>
        <end position="35"/>
    </location>
</feature>
<feature type="topological domain" description="Periplasmic" evidence="2">
    <location>
        <begin position="36"/>
        <end position="41"/>
    </location>
</feature>
<feature type="transmembrane region" description="Helical" evidence="2">
    <location>
        <begin position="42"/>
        <end position="62"/>
    </location>
</feature>
<feature type="topological domain" description="Cytoplasmic" evidence="2">
    <location>
        <begin position="63"/>
        <end position="93"/>
    </location>
</feature>
<feature type="transmembrane region" description="Helical" evidence="2">
    <location>
        <begin position="94"/>
        <end position="114"/>
    </location>
</feature>
<feature type="topological domain" description="Periplasmic" evidence="2">
    <location>
        <begin position="115"/>
        <end position="127"/>
    </location>
</feature>
<feature type="transmembrane region" description="Helical" evidence="2">
    <location>
        <begin position="128"/>
        <end position="148"/>
    </location>
</feature>
<feature type="topological domain" description="Cytoplasmic" evidence="2">
    <location>
        <begin position="149"/>
        <end position="157"/>
    </location>
</feature>
<feature type="transmembrane region" description="Helical" evidence="2">
    <location>
        <begin position="158"/>
        <end position="178"/>
    </location>
</feature>
<feature type="topological domain" description="Periplasmic" evidence="2">
    <location>
        <begin position="179"/>
        <end position="200"/>
    </location>
</feature>
<feature type="transmembrane region" description="Helical" evidence="2">
    <location>
        <begin position="201"/>
        <end position="221"/>
    </location>
</feature>
<feature type="topological domain" description="Cytoplasmic" evidence="2">
    <location>
        <begin position="222"/>
        <end position="239"/>
    </location>
</feature>
<feature type="transmembrane region" description="Helical" evidence="2">
    <location>
        <begin position="240"/>
        <end position="260"/>
    </location>
</feature>
<feature type="topological domain" description="Periplasmic" evidence="2">
    <location>
        <begin position="261"/>
        <end position="291"/>
    </location>
</feature>
<feature type="transmembrane region" description="Helical" evidence="2">
    <location>
        <begin position="292"/>
        <end position="312"/>
    </location>
</feature>
<feature type="topological domain" description="Cytoplasmic" evidence="2">
    <location>
        <begin position="313"/>
        <end position="335"/>
    </location>
</feature>
<feature type="transmembrane region" description="Helical" evidence="2">
    <location>
        <begin position="336"/>
        <end position="356"/>
    </location>
</feature>
<feature type="topological domain" description="Periplasmic" evidence="2">
    <location>
        <begin position="357"/>
        <end position="366"/>
    </location>
</feature>
<feature type="transmembrane region" description="Helical" evidence="2">
    <location>
        <begin position="367"/>
        <end position="387"/>
    </location>
</feature>
<feature type="topological domain" description="Cytoplasmic" evidence="2">
    <location>
        <begin position="388"/>
        <end position="412"/>
    </location>
</feature>
<feature type="transmembrane region" description="Helical" evidence="2">
    <location>
        <begin position="413"/>
        <end position="433"/>
    </location>
</feature>
<feature type="topological domain" description="Periplasmic" evidence="2">
    <location>
        <begin position="434"/>
        <end position="445"/>
    </location>
</feature>
<feature type="transmembrane region" description="Helical" evidence="2">
    <location>
        <begin position="446"/>
        <end position="466"/>
    </location>
</feature>
<feature type="topological domain" description="Cytoplasmic" evidence="2">
    <location>
        <begin position="467"/>
        <end position="511"/>
    </location>
</feature>
<feature type="sequence conflict" description="In Ref. 1; AAD14843." evidence="4" ref="1">
    <original>L</original>
    <variation>G</variation>
    <location>
        <position position="212"/>
    </location>
</feature>
<reference key="1">
    <citation type="journal article" date="1996" name="Mol. Microbiol.">
        <title>Identification of sigma S-dependent genes associated with the stationary-phase acid-resistance phenotype of Shigella flexneri.</title>
        <authorList>
            <person name="Waterman S.R."/>
            <person name="Small P.L.C."/>
        </authorList>
    </citation>
    <scope>NUCLEOTIDE SEQUENCE [GENOMIC DNA]</scope>
    <source>
        <strain>M25-8A / Serotype 2a</strain>
    </source>
</reference>
<reference key="2">
    <citation type="journal article" date="2002" name="Nucleic Acids Res.">
        <title>Genome sequence of Shigella flexneri 2a: insights into pathogenicity through comparison with genomes of Escherichia coli K12 and O157.</title>
        <authorList>
            <person name="Jin Q."/>
            <person name="Yuan Z."/>
            <person name="Xu J."/>
            <person name="Wang Y."/>
            <person name="Shen Y."/>
            <person name="Lu W."/>
            <person name="Wang J."/>
            <person name="Liu H."/>
            <person name="Yang J."/>
            <person name="Yang F."/>
            <person name="Zhang X."/>
            <person name="Zhang J."/>
            <person name="Yang G."/>
            <person name="Wu H."/>
            <person name="Qu D."/>
            <person name="Dong J."/>
            <person name="Sun L."/>
            <person name="Xue Y."/>
            <person name="Zhao A."/>
            <person name="Gao Y."/>
            <person name="Zhu J."/>
            <person name="Kan B."/>
            <person name="Ding K."/>
            <person name="Chen S."/>
            <person name="Cheng H."/>
            <person name="Yao Z."/>
            <person name="He B."/>
            <person name="Chen R."/>
            <person name="Ma D."/>
            <person name="Qiang B."/>
            <person name="Wen Y."/>
            <person name="Hou Y."/>
            <person name="Yu J."/>
        </authorList>
    </citation>
    <scope>NUCLEOTIDE SEQUENCE [LARGE SCALE GENOMIC DNA]</scope>
    <source>
        <strain>301 / Serotype 2a</strain>
    </source>
</reference>
<reference key="3">
    <citation type="journal article" date="2003" name="Infect. Immun.">
        <title>Complete genome sequence and comparative genomics of Shigella flexneri serotype 2a strain 2457T.</title>
        <authorList>
            <person name="Wei J."/>
            <person name="Goldberg M.B."/>
            <person name="Burland V."/>
            <person name="Venkatesan M.M."/>
            <person name="Deng W."/>
            <person name="Fournier G."/>
            <person name="Mayhew G.F."/>
            <person name="Plunkett G. III"/>
            <person name="Rose D.J."/>
            <person name="Darling A."/>
            <person name="Mau B."/>
            <person name="Perna N.T."/>
            <person name="Payne S.M."/>
            <person name="Runyen-Janecky L.J."/>
            <person name="Zhou S."/>
            <person name="Schwartz D.C."/>
            <person name="Blattner F.R."/>
        </authorList>
    </citation>
    <scope>NUCLEOTIDE SEQUENCE [LARGE SCALE GENOMIC DNA]</scope>
    <source>
        <strain>ATCC 700930 / 2457T / Serotype 2a</strain>
    </source>
</reference>
<reference key="4">
    <citation type="journal article" date="2003" name="FEMS Microbiol. Lett.">
        <title>The glutamate-dependent acid resistance system of Escherichia coli and Shigella flexneri is inhibited in vitro by L-trans-pyrrolidine-2,4-dicarboxylic acid.</title>
        <authorList>
            <person name="Waterman S.R."/>
            <person name="Small P.L.C."/>
        </authorList>
    </citation>
    <scope>ACTIVITY REGULATION</scope>
    <scope>INHIBITION BY L-PDC</scope>
    <source>
        <strain>3136 / Serotype 2a</strain>
    </source>
</reference>
<protein>
    <recommendedName>
        <fullName evidence="1">Glutamate/gamma-aminobutyrate antiporter</fullName>
        <shortName evidence="1">Glu/GABA antiporter</shortName>
    </recommendedName>
</protein>
<keyword id="KW-0029">Amino-acid transport</keyword>
<keyword id="KW-0050">Antiport</keyword>
<keyword id="KW-0997">Cell inner membrane</keyword>
<keyword id="KW-1003">Cell membrane</keyword>
<keyword id="KW-0472">Membrane</keyword>
<keyword id="KW-1185">Reference proteome</keyword>
<keyword id="KW-0812">Transmembrane</keyword>
<keyword id="KW-1133">Transmembrane helix</keyword>
<keyword id="KW-0813">Transport</keyword>
<keyword id="KW-0843">Virulence</keyword>
<proteinExistence type="inferred from homology"/>